<evidence type="ECO:0000250" key="1">
    <source>
        <dbReference type="UniProtKB" id="Q3TNL8"/>
    </source>
</evidence>
<evidence type="ECO:0000250" key="2">
    <source>
        <dbReference type="UniProtKB" id="Q8IWB1"/>
    </source>
</evidence>
<evidence type="ECO:0000255" key="3"/>
<evidence type="ECO:0000305" key="4"/>
<protein>
    <recommendedName>
        <fullName>Inositol 1,4,5-trisphosphate receptor-interacting protein</fullName>
    </recommendedName>
</protein>
<gene>
    <name type="primary">itprip</name>
</gene>
<reference key="1">
    <citation type="journal article" date="2001" name="Oncogene">
        <title>Conserved synteny between the Fugu and human PTEN locus and the evolutionary conservation of vertebrate PTEN function.</title>
        <authorList>
            <person name="Yu W.-P."/>
            <person name="Pallen C.J."/>
            <person name="Tay A."/>
            <person name="Jirik F.R."/>
            <person name="Brenner S."/>
            <person name="Tan Y.-H."/>
            <person name="Venkatesh B."/>
        </authorList>
    </citation>
    <scope>NUCLEOTIDE SEQUENCE [GENOMIC DNA]</scope>
</reference>
<sequence>MQGAIARMCVLVAAAILNHPLLSPQENATLHDQDEELMARMREHEEMLEKEQAKLEKEFSQLTPEPENIGSEEEYSGYLWSSVVFLVFLVIEMFRMHGAHTEIAPFGDEDIYSEGGSLAPRLKALDKEVLNNFCDKCTYTSSNEIWRVREFVEGFADDLLESLRSVCDRDADMEVGDFVGIGSVFESWKVCKPLMCDLLVPFSPPDPFALQFHLWCSCSSNVPPNMQGCGKIKVSKSGGNEGCLCGSANMGEDMLCLLHNGNDVPSVERSPDDLLCTRNTSFLSKDQVMKWFQISVTKAWGRISHKYDFEVTFRNLDAAGALKVRFHSGKVVVLNMIPVVQLQDTDAYFVSHFPSGSESPPDPYWPLSFAVYERNLLKLISKRLPQNSCHLHCLQIVTFLHRKQASLTGRTALTNYHIKTVLLHLLLGKRASSWGTEHMESRLCDLLSFLHRSLQEKRLHHVMIGNSKVTELIQVPEIISRAEPVNLLRCLVLQAELHAQTLQHFNEMLKNAPALLQDYTPHWSNGLCLLGDGV</sequence>
<comment type="function">
    <text evidence="2">Enhances Ca(2+)-mediated inhibition of inositol 1,4,5-triphosphate receptor (ITPR) Ca(2+) release.</text>
</comment>
<comment type="subcellular location">
    <subcellularLocation>
        <location evidence="2">Cell membrane</location>
        <topology evidence="3">Single-pass type I membrane protein</topology>
    </subcellularLocation>
    <subcellularLocation>
        <location evidence="1">Nucleus outer membrane</location>
        <topology evidence="3">Single-pass type I membrane protein</topology>
    </subcellularLocation>
</comment>
<comment type="similarity">
    <text evidence="4">Belongs to the ITPRIP family.</text>
</comment>
<dbReference type="EMBL" id="AF325922">
    <property type="protein sequence ID" value="AAL08420.1"/>
    <property type="molecule type" value="Genomic_DNA"/>
</dbReference>
<dbReference type="RefSeq" id="XP_003964036.1">
    <property type="nucleotide sequence ID" value="XM_003963987.3"/>
</dbReference>
<dbReference type="FunCoup" id="Q90XY5">
    <property type="interactions" value="1191"/>
</dbReference>
<dbReference type="GlyCosmos" id="Q90XY5">
    <property type="glycosylation" value="1 site, No reported glycans"/>
</dbReference>
<dbReference type="GeneID" id="101067007"/>
<dbReference type="KEGG" id="tru:101067007"/>
<dbReference type="CTD" id="85450"/>
<dbReference type="eggNOG" id="ENOG502QRDF">
    <property type="taxonomic scope" value="Eukaryota"/>
</dbReference>
<dbReference type="InParanoid" id="Q90XY5"/>
<dbReference type="OrthoDB" id="9923553at2759"/>
<dbReference type="Proteomes" id="UP000005226">
    <property type="component" value="Unplaced"/>
</dbReference>
<dbReference type="GO" id="GO:0005640">
    <property type="term" value="C:nuclear outer membrane"/>
    <property type="evidence" value="ECO:0000250"/>
    <property type="project" value="UniProtKB"/>
</dbReference>
<dbReference type="GO" id="GO:0005886">
    <property type="term" value="C:plasma membrane"/>
    <property type="evidence" value="ECO:0007669"/>
    <property type="project" value="UniProtKB-SubCell"/>
</dbReference>
<dbReference type="Gene3D" id="1.10.1410.40">
    <property type="match status" value="1"/>
</dbReference>
<dbReference type="Gene3D" id="3.30.460.90">
    <property type="match status" value="1"/>
</dbReference>
<dbReference type="InterPro" id="IPR026250">
    <property type="entry name" value="ITPRIP-like"/>
</dbReference>
<dbReference type="InterPro" id="IPR046906">
    <property type="entry name" value="Mab-21_HhH/H2TH-like"/>
</dbReference>
<dbReference type="InterPro" id="IPR024810">
    <property type="entry name" value="MAB21L/cGLR"/>
</dbReference>
<dbReference type="PANTHER" id="PTHR10656">
    <property type="entry name" value="CELL FATE DETERMINING PROTEIN MAB21-RELATED"/>
    <property type="match status" value="1"/>
</dbReference>
<dbReference type="PANTHER" id="PTHR10656:SF8">
    <property type="entry name" value="INOSITOL 1,4,5-TRISPHOSPHATE RECEPTOR-INTERACTING PROTEIN"/>
    <property type="match status" value="1"/>
</dbReference>
<dbReference type="Pfam" id="PF20266">
    <property type="entry name" value="Mab-21_C"/>
    <property type="match status" value="1"/>
</dbReference>
<dbReference type="PRINTS" id="PR02107">
    <property type="entry name" value="INOS145TPRIP"/>
</dbReference>
<dbReference type="SMART" id="SM01265">
    <property type="entry name" value="Mab-21"/>
    <property type="match status" value="1"/>
</dbReference>
<proteinExistence type="inferred from homology"/>
<organism>
    <name type="scientific">Takifugu rubripes</name>
    <name type="common">Japanese pufferfish</name>
    <name type="synonym">Fugu rubripes</name>
    <dbReference type="NCBI Taxonomy" id="31033"/>
    <lineage>
        <taxon>Eukaryota</taxon>
        <taxon>Metazoa</taxon>
        <taxon>Chordata</taxon>
        <taxon>Craniata</taxon>
        <taxon>Vertebrata</taxon>
        <taxon>Euteleostomi</taxon>
        <taxon>Actinopterygii</taxon>
        <taxon>Neopterygii</taxon>
        <taxon>Teleostei</taxon>
        <taxon>Neoteleostei</taxon>
        <taxon>Acanthomorphata</taxon>
        <taxon>Eupercaria</taxon>
        <taxon>Tetraodontiformes</taxon>
        <taxon>Tetradontoidea</taxon>
        <taxon>Tetraodontidae</taxon>
        <taxon>Takifugu</taxon>
    </lineage>
</organism>
<feature type="signal peptide" evidence="3">
    <location>
        <begin position="1"/>
        <end position="15"/>
    </location>
</feature>
<feature type="chain" id="PRO_0000320570" description="Inositol 1,4,5-trisphosphate receptor-interacting protein">
    <location>
        <begin position="16"/>
        <end position="534"/>
    </location>
</feature>
<feature type="topological domain" description="Extracellular" evidence="3">
    <location>
        <begin position="16"/>
        <end position="74"/>
    </location>
</feature>
<feature type="transmembrane region" description="Helical" evidence="3">
    <location>
        <begin position="75"/>
        <end position="91"/>
    </location>
</feature>
<feature type="topological domain" description="Cytoplasmic" evidence="3">
    <location>
        <begin position="92"/>
        <end position="534"/>
    </location>
</feature>
<feature type="coiled-coil region" evidence="3">
    <location>
        <begin position="25"/>
        <end position="63"/>
    </location>
</feature>
<feature type="glycosylation site" description="N-linked (GlcNAc...) asparagine" evidence="3">
    <location>
        <position position="27"/>
    </location>
</feature>
<name>IPRI_TAKRU</name>
<keyword id="KW-1003">Cell membrane</keyword>
<keyword id="KW-0175">Coiled coil</keyword>
<keyword id="KW-0325">Glycoprotein</keyword>
<keyword id="KW-0472">Membrane</keyword>
<keyword id="KW-0539">Nucleus</keyword>
<keyword id="KW-1185">Reference proteome</keyword>
<keyword id="KW-0732">Signal</keyword>
<keyword id="KW-0812">Transmembrane</keyword>
<keyword id="KW-1133">Transmembrane helix</keyword>
<accession>Q90XY5</accession>